<comment type="function">
    <text evidence="1">The beta subunit is responsible for the synthesis of L-tryptophan from indole and L-serine.</text>
</comment>
<comment type="catalytic activity">
    <reaction>
        <text>(1S,2R)-1-C-(indol-3-yl)glycerol 3-phosphate + L-serine = D-glyceraldehyde 3-phosphate + L-tryptophan + H2O</text>
        <dbReference type="Rhea" id="RHEA:10532"/>
        <dbReference type="ChEBI" id="CHEBI:15377"/>
        <dbReference type="ChEBI" id="CHEBI:33384"/>
        <dbReference type="ChEBI" id="CHEBI:57912"/>
        <dbReference type="ChEBI" id="CHEBI:58866"/>
        <dbReference type="ChEBI" id="CHEBI:59776"/>
        <dbReference type="EC" id="4.2.1.20"/>
    </reaction>
</comment>
<comment type="cofactor">
    <cofactor evidence="1">
        <name>pyridoxal 5'-phosphate</name>
        <dbReference type="ChEBI" id="CHEBI:597326"/>
    </cofactor>
</comment>
<comment type="pathway">
    <text>Amino-acid biosynthesis; L-tryptophan biosynthesis; L-tryptophan from chorismate: step 5/5.</text>
</comment>
<comment type="subunit">
    <text evidence="1">Tetramer of two alpha and two beta chains.</text>
</comment>
<comment type="similarity">
    <text evidence="2">Belongs to the TrpB family.</text>
</comment>
<proteinExistence type="inferred from homology"/>
<name>TRPB_LACLA</name>
<keyword id="KW-0028">Amino-acid biosynthesis</keyword>
<keyword id="KW-0057">Aromatic amino acid biosynthesis</keyword>
<keyword id="KW-0456">Lyase</keyword>
<keyword id="KW-0663">Pyridoxal phosphate</keyword>
<keyword id="KW-1185">Reference proteome</keyword>
<keyword id="KW-0822">Tryptophan biosynthesis</keyword>
<sequence length="402" mass="43746">MTYNQPNNKGFYGQFGGQFVPETLMTAVKQLEEAYVDSKKDPLFQAELKELLKDYVGRENPLYYAKRLTEYAGGAKIYLKREDLNHTGAHKINNALGQVLLAKKMGKNKVIAETGAGQHGVASATAAALFGMECTIYMGEEDVKRQSLNVFRMELLGAKVHSVTDGSRVLKDAVNAALRAWVAQVEDTHYVMGSVLGPHPFPQIVRDYQAVIGQEARAQFLEKENKLPDALVACVGGGSNSMGLFYPFVNDESVAMYGVEAAGLGIDTPHHAATITKGRPGVLHGTLMDVLQDENGQMLEAFSISAGLDYPGIGPEHSYFNAVGRAKYVDITDEEALEGFKILSRTEGIIPALESSHAIAYAVKLAKELGADKSMIVCLSGRGDKDVVQVKERLEAEKEVKK</sequence>
<protein>
    <recommendedName>
        <fullName>Tryptophan synthase beta chain</fullName>
        <ecNumber>4.2.1.20</ecNumber>
    </recommendedName>
</protein>
<evidence type="ECO:0000250" key="1"/>
<evidence type="ECO:0000305" key="2"/>
<dbReference type="EC" id="4.2.1.20"/>
<dbReference type="EMBL" id="M87483">
    <property type="protein sequence ID" value="AAA25228.1"/>
    <property type="molecule type" value="Genomic_DNA"/>
</dbReference>
<dbReference type="EMBL" id="AE005176">
    <property type="protein sequence ID" value="AAK05561.1"/>
    <property type="molecule type" value="Genomic_DNA"/>
</dbReference>
<dbReference type="PIR" id="S35129">
    <property type="entry name" value="S35129"/>
</dbReference>
<dbReference type="RefSeq" id="NP_267619.1">
    <property type="nucleotide sequence ID" value="NC_002662.1"/>
</dbReference>
<dbReference type="RefSeq" id="WP_010905986.1">
    <property type="nucleotide sequence ID" value="NC_002662.1"/>
</dbReference>
<dbReference type="SMR" id="Q01998"/>
<dbReference type="PaxDb" id="272623-L0049"/>
<dbReference type="EnsemblBacteria" id="AAK05561">
    <property type="protein sequence ID" value="AAK05561"/>
    <property type="gene ID" value="L0049"/>
</dbReference>
<dbReference type="KEGG" id="lla:L0049"/>
<dbReference type="PATRIC" id="fig|272623.7.peg.1573"/>
<dbReference type="eggNOG" id="COG0133">
    <property type="taxonomic scope" value="Bacteria"/>
</dbReference>
<dbReference type="HOGENOM" id="CLU_016734_3_1_9"/>
<dbReference type="OrthoDB" id="9766131at2"/>
<dbReference type="UniPathway" id="UPA00035">
    <property type="reaction ID" value="UER00044"/>
</dbReference>
<dbReference type="Proteomes" id="UP000002196">
    <property type="component" value="Chromosome"/>
</dbReference>
<dbReference type="GO" id="GO:0005737">
    <property type="term" value="C:cytoplasm"/>
    <property type="evidence" value="ECO:0007669"/>
    <property type="project" value="TreeGrafter"/>
</dbReference>
<dbReference type="GO" id="GO:0004834">
    <property type="term" value="F:tryptophan synthase activity"/>
    <property type="evidence" value="ECO:0007669"/>
    <property type="project" value="UniProtKB-UniRule"/>
</dbReference>
<dbReference type="CDD" id="cd06446">
    <property type="entry name" value="Trp-synth_B"/>
    <property type="match status" value="1"/>
</dbReference>
<dbReference type="FunFam" id="3.40.50.1100:FF:000001">
    <property type="entry name" value="Tryptophan synthase beta chain"/>
    <property type="match status" value="1"/>
</dbReference>
<dbReference type="FunFam" id="3.40.50.1100:FF:000004">
    <property type="entry name" value="Tryptophan synthase beta chain"/>
    <property type="match status" value="1"/>
</dbReference>
<dbReference type="Gene3D" id="3.40.50.1100">
    <property type="match status" value="2"/>
</dbReference>
<dbReference type="HAMAP" id="MF_00133">
    <property type="entry name" value="Trp_synth_beta"/>
    <property type="match status" value="1"/>
</dbReference>
<dbReference type="InterPro" id="IPR006653">
    <property type="entry name" value="Trp_synth_b_CS"/>
</dbReference>
<dbReference type="InterPro" id="IPR006654">
    <property type="entry name" value="Trp_synth_beta"/>
</dbReference>
<dbReference type="InterPro" id="IPR023026">
    <property type="entry name" value="Trp_synth_beta/beta-like"/>
</dbReference>
<dbReference type="InterPro" id="IPR001926">
    <property type="entry name" value="TrpB-like_PALP"/>
</dbReference>
<dbReference type="InterPro" id="IPR036052">
    <property type="entry name" value="TrpB-like_PALP_sf"/>
</dbReference>
<dbReference type="NCBIfam" id="TIGR00263">
    <property type="entry name" value="trpB"/>
    <property type="match status" value="1"/>
</dbReference>
<dbReference type="PANTHER" id="PTHR48077:SF3">
    <property type="entry name" value="TRYPTOPHAN SYNTHASE"/>
    <property type="match status" value="1"/>
</dbReference>
<dbReference type="PANTHER" id="PTHR48077">
    <property type="entry name" value="TRYPTOPHAN SYNTHASE-RELATED"/>
    <property type="match status" value="1"/>
</dbReference>
<dbReference type="Pfam" id="PF00291">
    <property type="entry name" value="PALP"/>
    <property type="match status" value="1"/>
</dbReference>
<dbReference type="PIRSF" id="PIRSF001413">
    <property type="entry name" value="Trp_syn_beta"/>
    <property type="match status" value="1"/>
</dbReference>
<dbReference type="SUPFAM" id="SSF53686">
    <property type="entry name" value="Tryptophan synthase beta subunit-like PLP-dependent enzymes"/>
    <property type="match status" value="1"/>
</dbReference>
<dbReference type="PROSITE" id="PS00168">
    <property type="entry name" value="TRP_SYNTHASE_BETA"/>
    <property type="match status" value="1"/>
</dbReference>
<feature type="chain" id="PRO_0000098959" description="Tryptophan synthase beta chain">
    <location>
        <begin position="1"/>
        <end position="402"/>
    </location>
</feature>
<feature type="modified residue" description="N6-(pyridoxal phosphate)lysine" evidence="1">
    <location>
        <position position="91"/>
    </location>
</feature>
<organism>
    <name type="scientific">Lactococcus lactis subsp. lactis (strain IL1403)</name>
    <name type="common">Streptococcus lactis</name>
    <dbReference type="NCBI Taxonomy" id="272623"/>
    <lineage>
        <taxon>Bacteria</taxon>
        <taxon>Bacillati</taxon>
        <taxon>Bacillota</taxon>
        <taxon>Bacilli</taxon>
        <taxon>Lactobacillales</taxon>
        <taxon>Streptococcaceae</taxon>
        <taxon>Lactococcus</taxon>
    </lineage>
</organism>
<reference key="1">
    <citation type="journal article" date="1992" name="J. Bacteriol.">
        <title>Tryptophan biosynthesis genes in Lactococcus lactis subsp. lactis.</title>
        <authorList>
            <person name="Bardowski J."/>
            <person name="Ehrlich S.D."/>
            <person name="Chopin A."/>
        </authorList>
    </citation>
    <scope>NUCLEOTIDE SEQUENCE [GENOMIC DNA]</scope>
    <source>
        <strain>IL1403</strain>
    </source>
</reference>
<reference key="2">
    <citation type="journal article" date="2001" name="Genome Res.">
        <title>The complete genome sequence of the lactic acid bacterium Lactococcus lactis ssp. lactis IL1403.</title>
        <authorList>
            <person name="Bolotin A."/>
            <person name="Wincker P."/>
            <person name="Mauger S."/>
            <person name="Jaillon O."/>
            <person name="Malarme K."/>
            <person name="Weissenbach J."/>
            <person name="Ehrlich S.D."/>
            <person name="Sorokin A."/>
        </authorList>
    </citation>
    <scope>NUCLEOTIDE SEQUENCE [LARGE SCALE GENOMIC DNA]</scope>
    <source>
        <strain>IL1403</strain>
    </source>
</reference>
<accession>Q01998</accession>
<gene>
    <name type="primary">trpB</name>
    <name type="ordered locus">LL1463</name>
    <name type="ORF">L0049</name>
</gene>